<proteinExistence type="inferred from homology"/>
<sequence length="228" mass="25354">MQKLKQQVFEANMDLPRYGLVTFTWGNVSTIDRERGLVVIKPSGVAYETMKADDMVVVDMSGKVVEGEYRPSSDTATHLELYRRYPSLGGIVHTHSTHATAWAQAGLAIPALGTTHADYFFGDIPCTRGLSEEEVQGEYELNTGKVIIETLGNAEPLHTPGIVVYQHGPFAWGKDAHDAVHNAVVMEEVAKMAWIARGINPQLNHIDSYLMNKHFMRKHGPNAYYGQK</sequence>
<keyword id="KW-0119">Carbohydrate metabolism</keyword>
<keyword id="KW-0413">Isomerase</keyword>
<keyword id="KW-0479">Metal-binding</keyword>
<keyword id="KW-0862">Zinc</keyword>
<reference key="1">
    <citation type="journal article" date="2009" name="PLoS Genet.">
        <title>Organised genome dynamics in the Escherichia coli species results in highly diverse adaptive paths.</title>
        <authorList>
            <person name="Touchon M."/>
            <person name="Hoede C."/>
            <person name="Tenaillon O."/>
            <person name="Barbe V."/>
            <person name="Baeriswyl S."/>
            <person name="Bidet P."/>
            <person name="Bingen E."/>
            <person name="Bonacorsi S."/>
            <person name="Bouchier C."/>
            <person name="Bouvet O."/>
            <person name="Calteau A."/>
            <person name="Chiapello H."/>
            <person name="Clermont O."/>
            <person name="Cruveiller S."/>
            <person name="Danchin A."/>
            <person name="Diard M."/>
            <person name="Dossat C."/>
            <person name="Karoui M.E."/>
            <person name="Frapy E."/>
            <person name="Garry L."/>
            <person name="Ghigo J.M."/>
            <person name="Gilles A.M."/>
            <person name="Johnson J."/>
            <person name="Le Bouguenec C."/>
            <person name="Lescat M."/>
            <person name="Mangenot S."/>
            <person name="Martinez-Jehanne V."/>
            <person name="Matic I."/>
            <person name="Nassif X."/>
            <person name="Oztas S."/>
            <person name="Petit M.A."/>
            <person name="Pichon C."/>
            <person name="Rouy Z."/>
            <person name="Ruf C.S."/>
            <person name="Schneider D."/>
            <person name="Tourret J."/>
            <person name="Vacherie B."/>
            <person name="Vallenet D."/>
            <person name="Medigue C."/>
            <person name="Rocha E.P.C."/>
            <person name="Denamur E."/>
        </authorList>
    </citation>
    <scope>NUCLEOTIDE SEQUENCE [LARGE SCALE GENOMIC DNA]</scope>
    <source>
        <strain>UMN026 / ExPEC</strain>
    </source>
</reference>
<protein>
    <recommendedName>
        <fullName evidence="1">L-ribulose-5-phosphate 4-epimerase UlaF</fullName>
        <ecNumber evidence="1">5.1.3.4</ecNumber>
    </recommendedName>
    <alternativeName>
        <fullName evidence="1">L-ascorbate utilization protein F</fullName>
    </alternativeName>
    <alternativeName>
        <fullName evidence="1">Phosphoribulose isomerase</fullName>
    </alternativeName>
</protein>
<comment type="function">
    <text evidence="1">Catalyzes the isomerization of L-ribulose 5-phosphate to D-xylulose 5-phosphate. Is involved in the anaerobic L-ascorbate utilization.</text>
</comment>
<comment type="catalytic activity">
    <reaction evidence="1">
        <text>L-ribulose 5-phosphate = D-xylulose 5-phosphate</text>
        <dbReference type="Rhea" id="RHEA:22368"/>
        <dbReference type="ChEBI" id="CHEBI:57737"/>
        <dbReference type="ChEBI" id="CHEBI:58226"/>
        <dbReference type="EC" id="5.1.3.4"/>
    </reaction>
</comment>
<comment type="cofactor">
    <cofactor evidence="1">
        <name>Zn(2+)</name>
        <dbReference type="ChEBI" id="CHEBI:29105"/>
    </cofactor>
    <text evidence="1">Binds 1 zinc ion per subunit.</text>
</comment>
<comment type="pathway">
    <text evidence="1">Cofactor degradation; L-ascorbate degradation; D-xylulose 5-phosphate from L-ascorbate: step 4/4.</text>
</comment>
<comment type="induction">
    <text evidence="1">Induced by L-ascorbate. Repressed by UlaR.</text>
</comment>
<comment type="similarity">
    <text evidence="1">Belongs to the aldolase class II family. AraD/FucA subfamily.</text>
</comment>
<evidence type="ECO:0000255" key="1">
    <source>
        <dbReference type="HAMAP-Rule" id="MF_01952"/>
    </source>
</evidence>
<name>ULAF_ECOLU</name>
<feature type="chain" id="PRO_1000188847" description="L-ribulose-5-phosphate 4-epimerase UlaF">
    <location>
        <begin position="1"/>
        <end position="228"/>
    </location>
</feature>
<feature type="active site" description="Proton donor/acceptor" evidence="1">
    <location>
        <position position="118"/>
    </location>
</feature>
<feature type="active site" description="Proton donor/acceptor" evidence="1">
    <location>
        <position position="225"/>
    </location>
</feature>
<feature type="binding site" evidence="1">
    <location>
        <begin position="26"/>
        <end position="27"/>
    </location>
    <ligand>
        <name>substrate</name>
    </ligand>
</feature>
<feature type="binding site" evidence="1">
    <location>
        <begin position="43"/>
        <end position="44"/>
    </location>
    <ligand>
        <name>substrate</name>
    </ligand>
</feature>
<feature type="binding site" evidence="1">
    <location>
        <begin position="72"/>
        <end position="73"/>
    </location>
    <ligand>
        <name>substrate</name>
    </ligand>
</feature>
<feature type="binding site" evidence="1">
    <location>
        <position position="74"/>
    </location>
    <ligand>
        <name>Zn(2+)</name>
        <dbReference type="ChEBI" id="CHEBI:29105"/>
    </ligand>
</feature>
<feature type="binding site" evidence="1">
    <location>
        <position position="93"/>
    </location>
    <ligand>
        <name>Zn(2+)</name>
        <dbReference type="ChEBI" id="CHEBI:29105"/>
    </ligand>
</feature>
<feature type="binding site" evidence="1">
    <location>
        <position position="95"/>
    </location>
    <ligand>
        <name>Zn(2+)</name>
        <dbReference type="ChEBI" id="CHEBI:29105"/>
    </ligand>
</feature>
<feature type="binding site" evidence="1">
    <location>
        <position position="167"/>
    </location>
    <ligand>
        <name>Zn(2+)</name>
        <dbReference type="ChEBI" id="CHEBI:29105"/>
    </ligand>
</feature>
<dbReference type="EC" id="5.1.3.4" evidence="1"/>
<dbReference type="EMBL" id="CU928163">
    <property type="protein sequence ID" value="CAR15844.1"/>
    <property type="molecule type" value="Genomic_DNA"/>
</dbReference>
<dbReference type="RefSeq" id="WP_001170835.1">
    <property type="nucleotide sequence ID" value="NC_011751.1"/>
</dbReference>
<dbReference type="RefSeq" id="YP_002415328.1">
    <property type="nucleotide sequence ID" value="NC_011751.1"/>
</dbReference>
<dbReference type="SMR" id="B7NGD2"/>
<dbReference type="STRING" id="585056.ECUMN_4731"/>
<dbReference type="KEGG" id="eum:ECUMN_4731"/>
<dbReference type="PATRIC" id="fig|585056.7.peg.4894"/>
<dbReference type="HOGENOM" id="CLU_006033_5_0_6"/>
<dbReference type="UniPathway" id="UPA00263">
    <property type="reaction ID" value="UER00380"/>
</dbReference>
<dbReference type="Proteomes" id="UP000007097">
    <property type="component" value="Chromosome"/>
</dbReference>
<dbReference type="GO" id="GO:0005829">
    <property type="term" value="C:cytosol"/>
    <property type="evidence" value="ECO:0007669"/>
    <property type="project" value="TreeGrafter"/>
</dbReference>
<dbReference type="GO" id="GO:0016832">
    <property type="term" value="F:aldehyde-lyase activity"/>
    <property type="evidence" value="ECO:0007669"/>
    <property type="project" value="TreeGrafter"/>
</dbReference>
<dbReference type="GO" id="GO:0008742">
    <property type="term" value="F:L-ribulose-phosphate 4-epimerase activity"/>
    <property type="evidence" value="ECO:0007669"/>
    <property type="project" value="UniProtKB-UniRule"/>
</dbReference>
<dbReference type="GO" id="GO:0008270">
    <property type="term" value="F:zinc ion binding"/>
    <property type="evidence" value="ECO:0007669"/>
    <property type="project" value="UniProtKB-UniRule"/>
</dbReference>
<dbReference type="GO" id="GO:0019854">
    <property type="term" value="P:L-ascorbic acid catabolic process"/>
    <property type="evidence" value="ECO:0007669"/>
    <property type="project" value="UniProtKB-UniRule"/>
</dbReference>
<dbReference type="GO" id="GO:0019323">
    <property type="term" value="P:pentose catabolic process"/>
    <property type="evidence" value="ECO:0007669"/>
    <property type="project" value="TreeGrafter"/>
</dbReference>
<dbReference type="CDD" id="cd00398">
    <property type="entry name" value="Aldolase_II"/>
    <property type="match status" value="1"/>
</dbReference>
<dbReference type="FunFam" id="3.40.225.10:FF:000001">
    <property type="entry name" value="L-ribulose-5-phosphate 4-epimerase UlaF"/>
    <property type="match status" value="1"/>
</dbReference>
<dbReference type="Gene3D" id="3.40.225.10">
    <property type="entry name" value="Class II aldolase/adducin N-terminal domain"/>
    <property type="match status" value="1"/>
</dbReference>
<dbReference type="HAMAP" id="MF_01952">
    <property type="entry name" value="UlaF"/>
    <property type="match status" value="1"/>
</dbReference>
<dbReference type="InterPro" id="IPR050197">
    <property type="entry name" value="Aldolase_class_II_sugar_metab"/>
</dbReference>
<dbReference type="InterPro" id="IPR001303">
    <property type="entry name" value="Aldolase_II/adducin_N"/>
</dbReference>
<dbReference type="InterPro" id="IPR036409">
    <property type="entry name" value="Aldolase_II/adducin_N_sf"/>
</dbReference>
<dbReference type="InterPro" id="IPR023499">
    <property type="entry name" value="UlaF"/>
</dbReference>
<dbReference type="NCBIfam" id="NF006047">
    <property type="entry name" value="PRK08193.1"/>
    <property type="match status" value="1"/>
</dbReference>
<dbReference type="NCBIfam" id="NF009003">
    <property type="entry name" value="PRK12348.1"/>
    <property type="match status" value="1"/>
</dbReference>
<dbReference type="PANTHER" id="PTHR22789">
    <property type="entry name" value="FUCULOSE PHOSPHATE ALDOLASE"/>
    <property type="match status" value="1"/>
</dbReference>
<dbReference type="PANTHER" id="PTHR22789:SF9">
    <property type="entry name" value="L-RIBULOSE-5-PHOSPHATE 4-EPIMERASE ULAF"/>
    <property type="match status" value="1"/>
</dbReference>
<dbReference type="Pfam" id="PF00596">
    <property type="entry name" value="Aldolase_II"/>
    <property type="match status" value="1"/>
</dbReference>
<dbReference type="SMART" id="SM01007">
    <property type="entry name" value="Aldolase_II"/>
    <property type="match status" value="1"/>
</dbReference>
<dbReference type="SUPFAM" id="SSF53639">
    <property type="entry name" value="AraD/HMP-PK domain-like"/>
    <property type="match status" value="1"/>
</dbReference>
<gene>
    <name evidence="1" type="primary">ulaF</name>
    <name type="ordered locus">ECUMN_4731</name>
</gene>
<accession>B7NGD2</accession>
<organism>
    <name type="scientific">Escherichia coli O17:K52:H18 (strain UMN026 / ExPEC)</name>
    <dbReference type="NCBI Taxonomy" id="585056"/>
    <lineage>
        <taxon>Bacteria</taxon>
        <taxon>Pseudomonadati</taxon>
        <taxon>Pseudomonadota</taxon>
        <taxon>Gammaproteobacteria</taxon>
        <taxon>Enterobacterales</taxon>
        <taxon>Enterobacteriaceae</taxon>
        <taxon>Escherichia</taxon>
    </lineage>
</organism>